<dbReference type="EMBL" id="AE014074">
    <property type="protein sequence ID" value="AAM80397.1"/>
    <property type="molecule type" value="Genomic_DNA"/>
</dbReference>
<dbReference type="SMR" id="P0DG96"/>
<dbReference type="KEGG" id="spg:SpyM3_1790"/>
<dbReference type="HOGENOM" id="CLU_061989_2_1_9"/>
<dbReference type="Proteomes" id="UP000000564">
    <property type="component" value="Chromosome"/>
</dbReference>
<dbReference type="GO" id="GO:0005829">
    <property type="term" value="C:cytosol"/>
    <property type="evidence" value="ECO:0007669"/>
    <property type="project" value="TreeGrafter"/>
</dbReference>
<dbReference type="GO" id="GO:0033194">
    <property type="term" value="P:response to hydroperoxide"/>
    <property type="evidence" value="ECO:0007669"/>
    <property type="project" value="TreeGrafter"/>
</dbReference>
<dbReference type="HAMAP" id="MF_00652">
    <property type="entry name" value="UPF0246"/>
    <property type="match status" value="1"/>
</dbReference>
<dbReference type="InterPro" id="IPR005583">
    <property type="entry name" value="YaaA"/>
</dbReference>
<dbReference type="NCBIfam" id="NF002543">
    <property type="entry name" value="PRK02101.1-4"/>
    <property type="match status" value="1"/>
</dbReference>
<dbReference type="PANTHER" id="PTHR30283:SF4">
    <property type="entry name" value="PEROXIDE STRESS RESISTANCE PROTEIN YAAA"/>
    <property type="match status" value="1"/>
</dbReference>
<dbReference type="PANTHER" id="PTHR30283">
    <property type="entry name" value="PEROXIDE STRESS RESPONSE PROTEIN YAAA"/>
    <property type="match status" value="1"/>
</dbReference>
<dbReference type="Pfam" id="PF03883">
    <property type="entry name" value="H2O2_YaaD"/>
    <property type="match status" value="1"/>
</dbReference>
<protein>
    <recommendedName>
        <fullName evidence="1">UPF0246 protein SpyM3_1790</fullName>
    </recommendedName>
</protein>
<sequence length="243" mass="28239">MLTFLIPTAKEMTIPKESHPHLLPQDSQAILKIMAAMTTEDLAKAYRIKEEAAKKEQQRWQDMASQKSLAYPAYQLFNGLMYRHIKRDKLTTQEQAYLTQQVYITSSFYGIIPANHPIAEHRHDFHTRIKIEGQSLKSYWRPCYNQFAKEHPQVISLLSSEFDDVFSKDCKQLWISPKFMAEKEGQFKTHSTISKKARGAFLTACMENNCQTVDSLKSLVFAGFYYHPDLSTDHEFVYIKKEA</sequence>
<accession>P0DG96</accession>
<accession>Q8K5K6</accession>
<comment type="similarity">
    <text evidence="1">Belongs to the UPF0246 family.</text>
</comment>
<reference key="1">
    <citation type="journal article" date="2002" name="Proc. Natl. Acad. Sci. U.S.A.">
        <title>Genome sequence of a serotype M3 strain of group A Streptococcus: phage-encoded toxins, the high-virulence phenotype, and clone emergence.</title>
        <authorList>
            <person name="Beres S.B."/>
            <person name="Sylva G.L."/>
            <person name="Barbian K.D."/>
            <person name="Lei B."/>
            <person name="Hoff J.S."/>
            <person name="Mammarella N.D."/>
            <person name="Liu M.-Y."/>
            <person name="Smoot J.C."/>
            <person name="Porcella S.F."/>
            <person name="Parkins L.D."/>
            <person name="Campbell D.S."/>
            <person name="Smith T.M."/>
            <person name="McCormick J.K."/>
            <person name="Leung D.Y.M."/>
            <person name="Schlievert P.M."/>
            <person name="Musser J.M."/>
        </authorList>
    </citation>
    <scope>NUCLEOTIDE SEQUENCE [LARGE SCALE GENOMIC DNA]</scope>
    <source>
        <strain>ATCC BAA-595 / MGAS315</strain>
    </source>
</reference>
<name>Y1790_STRP3</name>
<gene>
    <name type="ordered locus">SpyM3_1790</name>
</gene>
<evidence type="ECO:0000255" key="1">
    <source>
        <dbReference type="HAMAP-Rule" id="MF_00652"/>
    </source>
</evidence>
<proteinExistence type="inferred from homology"/>
<feature type="chain" id="PRO_0000204012" description="UPF0246 protein SpyM3_1790">
    <location>
        <begin position="1"/>
        <end position="243"/>
    </location>
</feature>
<organism>
    <name type="scientific">Streptococcus pyogenes serotype M3 (strain ATCC BAA-595 / MGAS315)</name>
    <dbReference type="NCBI Taxonomy" id="198466"/>
    <lineage>
        <taxon>Bacteria</taxon>
        <taxon>Bacillati</taxon>
        <taxon>Bacillota</taxon>
        <taxon>Bacilli</taxon>
        <taxon>Lactobacillales</taxon>
        <taxon>Streptococcaceae</taxon>
        <taxon>Streptococcus</taxon>
    </lineage>
</organism>